<evidence type="ECO:0000250" key="1"/>
<evidence type="ECO:0000250" key="2">
    <source>
        <dbReference type="UniProtKB" id="Q64355"/>
    </source>
</evidence>
<evidence type="ECO:0000255" key="3"/>
<evidence type="ECO:0000255" key="4">
    <source>
        <dbReference type="PROSITE-ProRule" id="PRU00192"/>
    </source>
</evidence>
<evidence type="ECO:0000256" key="5">
    <source>
        <dbReference type="SAM" id="MobiDB-lite"/>
    </source>
</evidence>
<evidence type="ECO:0000269" key="6">
    <source>
    </source>
</evidence>
<evidence type="ECO:0000303" key="7">
    <source>
    </source>
</evidence>
<evidence type="ECO:0000303" key="8">
    <source>
    </source>
</evidence>
<evidence type="ECO:0000303" key="9">
    <source>
    </source>
</evidence>
<evidence type="ECO:0000305" key="10"/>
<accession>O43281</accession>
<accession>B2RAJ7</accession>
<accession>B4DJ56</accession>
<accession>E9PGU2</accession>
<accession>O43282</accession>
<feature type="chain" id="PRO_0000086940" description="Embryonal Fyn-associated substrate">
    <location>
        <begin position="1"/>
        <end position="561"/>
    </location>
</feature>
<feature type="domain" description="SH3" evidence="4">
    <location>
        <begin position="5"/>
        <end position="68"/>
    </location>
</feature>
<feature type="region of interest" description="Disordered" evidence="5">
    <location>
        <begin position="68"/>
        <end position="123"/>
    </location>
</feature>
<feature type="region of interest" description="Disordered" evidence="5">
    <location>
        <begin position="171"/>
        <end position="215"/>
    </location>
</feature>
<feature type="region of interest" description="Disordered" evidence="5">
    <location>
        <begin position="240"/>
        <end position="372"/>
    </location>
</feature>
<feature type="region of interest" description="Disordered" evidence="5">
    <location>
        <begin position="390"/>
        <end position="422"/>
    </location>
</feature>
<feature type="region of interest" description="Divergent helix-loop-helix motif">
    <location>
        <begin position="438"/>
        <end position="488"/>
    </location>
</feature>
<feature type="short sequence motif" description="SH3-binding" evidence="3">
    <location>
        <begin position="305"/>
        <end position="311"/>
    </location>
</feature>
<feature type="short sequence motif" description="SH3-binding" evidence="3">
    <location>
        <begin position="335"/>
        <end position="341"/>
    </location>
</feature>
<feature type="compositionally biased region" description="Pro residues" evidence="5">
    <location>
        <begin position="103"/>
        <end position="123"/>
    </location>
</feature>
<feature type="compositionally biased region" description="Pro residues" evidence="5">
    <location>
        <begin position="308"/>
        <end position="325"/>
    </location>
</feature>
<feature type="compositionally biased region" description="Basic and acidic residues" evidence="5">
    <location>
        <begin position="352"/>
        <end position="372"/>
    </location>
</feature>
<feature type="modified residue" description="Phosphotyrosine; by SRC" evidence="2">
    <location>
        <position position="253"/>
    </location>
</feature>
<feature type="splice variant" id="VSP_004232" description="In isoform Efs2 and isoform 3." evidence="7 8 9">
    <location>
        <begin position="7"/>
        <end position="99"/>
    </location>
</feature>
<feature type="splice variant" id="VSP_054584" description="In isoform 3." evidence="7">
    <location>
        <begin position="186"/>
        <end position="261"/>
    </location>
</feature>
<feature type="sequence variant" id="VAR_054088" description="In dbSNP:rs2231798.">
    <original>T</original>
    <variation>A</variation>
    <location>
        <position position="7"/>
    </location>
</feature>
<feature type="sequence variant" id="VAR_054089" description="In dbSNP:rs2231801.">
    <original>V</original>
    <variation>M</variation>
    <location>
        <position position="100"/>
    </location>
</feature>
<feature type="sequence variant" id="VAR_035912" description="In a colorectal cancer sample; somatic mutation; dbSNP:rs1463886157." evidence="6">
    <original>M</original>
    <variation>I</variation>
    <location>
        <position position="361"/>
    </location>
</feature>
<comment type="function">
    <text evidence="1">Docking protein which plays a central coordinating role for tyrosine-kinase-based signaling related to cell adhesion. May serve as an activator of SRC and a downstream effector. Interacts with the SH3 domain of FYN and with CRK, SRC, and YES (By similarity).</text>
</comment>
<comment type="interaction">
    <interactant intactId="EBI-718488">
        <id>O43281</id>
    </interactant>
    <interactant intactId="EBI-743598">
        <id>Q9NYB9</id>
        <label>ABI2</label>
    </interactant>
    <organismsDiffer>false</organismsDiffer>
    <experiments>6</experiments>
</comment>
<comment type="interaction">
    <interactant intactId="EBI-718488">
        <id>O43281</id>
    </interactant>
    <interactant intactId="EBI-2105445">
        <id>P51451</id>
        <label>BLK</label>
    </interactant>
    <organismsDiffer>false</organismsDiffer>
    <experiments>5</experiments>
</comment>
<comment type="interaction">
    <interactant intactId="EBI-718488">
        <id>O43281</id>
    </interactant>
    <interactant intactId="EBI-515315">
        <id>P06241</id>
        <label>FYN</label>
    </interactant>
    <organismsDiffer>false</organismsDiffer>
    <experiments>4</experiments>
</comment>
<comment type="interaction">
    <interactant intactId="EBI-718488">
        <id>O43281</id>
    </interactant>
    <interactant intactId="EBI-1050769">
        <id>O75694</id>
        <label>NUP155</label>
    </interactant>
    <organismsDiffer>false</organismsDiffer>
    <experiments>3</experiments>
</comment>
<comment type="interaction">
    <interactant intactId="EBI-718488">
        <id>O43281</id>
    </interactant>
    <interactant intactId="EBI-1051152">
        <id>Q92882</id>
        <label>OSTF1</label>
    </interactant>
    <organismsDiffer>false</organismsDiffer>
    <experiments>3</experiments>
</comment>
<comment type="interaction">
    <interactant intactId="EBI-718488">
        <id>O43281</id>
    </interactant>
    <interactant intactId="EBI-311323">
        <id>O94875</id>
        <label>SORBS2</label>
    </interactant>
    <organismsDiffer>false</organismsDiffer>
    <experiments>3</experiments>
</comment>
<comment type="interaction">
    <interactant intactId="EBI-718488">
        <id>O43281</id>
    </interactant>
    <interactant intactId="EBI-6423734">
        <id>Q9BXA7</id>
        <label>TSSK1B</label>
    </interactant>
    <organismsDiffer>false</organismsDiffer>
    <experiments>3</experiments>
</comment>
<comment type="interaction">
    <interactant intactId="EBI-718488">
        <id>O43281</id>
    </interactant>
    <interactant intactId="EBI-740727">
        <id>Q8TAU3</id>
        <label>ZNF417</label>
    </interactant>
    <organismsDiffer>false</organismsDiffer>
    <experiments>3</experiments>
</comment>
<comment type="interaction">
    <interactant intactId="EBI-11525448">
        <id>O43281-2</id>
    </interactant>
    <interactant intactId="EBI-11096309">
        <id>Q9NYB9-2</id>
        <label>ABI2</label>
    </interactant>
    <organismsDiffer>false</organismsDiffer>
    <experiments>5</experiments>
</comment>
<comment type="interaction">
    <interactant intactId="EBI-11525448">
        <id>O43281-2</id>
    </interactant>
    <interactant intactId="EBI-727098">
        <id>P21549</id>
        <label>AGXT</label>
    </interactant>
    <organismsDiffer>false</organismsDiffer>
    <experiments>3</experiments>
</comment>
<comment type="interaction">
    <interactant intactId="EBI-11525448">
        <id>O43281-2</id>
    </interactant>
    <interactant intactId="EBI-2105445">
        <id>P51451</id>
        <label>BLK</label>
    </interactant>
    <organismsDiffer>false</organismsDiffer>
    <experiments>3</experiments>
</comment>
<comment type="interaction">
    <interactant intactId="EBI-11525448">
        <id>O43281-2</id>
    </interactant>
    <interactant intactId="EBI-10691738">
        <id>P06241-3</id>
        <label>FYN</label>
    </interactant>
    <organismsDiffer>false</organismsDiffer>
    <experiments>5</experiments>
</comment>
<comment type="interaction">
    <interactant intactId="EBI-11525448">
        <id>O43281-2</id>
    </interactant>
    <interactant intactId="EBI-726150">
        <id>Q92990</id>
        <label>GLMN</label>
    </interactant>
    <organismsDiffer>false</organismsDiffer>
    <experiments>3</experiments>
</comment>
<comment type="interaction">
    <interactant intactId="EBI-11525448">
        <id>O43281-2</id>
    </interactant>
    <interactant intactId="EBI-751540">
        <id>O95872</id>
        <label>GPANK1</label>
    </interactant>
    <organismsDiffer>false</organismsDiffer>
    <experiments>3</experiments>
</comment>
<comment type="interaction">
    <interactant intactId="EBI-11525448">
        <id>O43281-2</id>
    </interactant>
    <interactant intactId="EBI-8474075">
        <id>Q68G74</id>
        <label>LHX8</label>
    </interactant>
    <organismsDiffer>false</organismsDiffer>
    <experiments>3</experiments>
</comment>
<comment type="interaction">
    <interactant intactId="EBI-11525448">
        <id>O43281-2</id>
    </interactant>
    <interactant intactId="EBI-14086479">
        <id>Q8IVT4</id>
        <label>MGC50722</label>
    </interactant>
    <organismsDiffer>false</organismsDiffer>
    <experiments>3</experiments>
</comment>
<comment type="interaction">
    <interactant intactId="EBI-11525448">
        <id>O43281-2</id>
    </interactant>
    <interactant intactId="EBI-5662487">
        <id>Q8TDC0</id>
        <label>MYOZ3</label>
    </interactant>
    <organismsDiffer>false</organismsDiffer>
    <experiments>3</experiments>
</comment>
<comment type="interaction">
    <interactant intactId="EBI-11525448">
        <id>O43281-2</id>
    </interactant>
    <interactant intactId="EBI-16429340">
        <id>A0A0S2Z4D7</id>
        <label>NCK1</label>
    </interactant>
    <organismsDiffer>false</organismsDiffer>
    <experiments>3</experiments>
</comment>
<comment type="interaction">
    <interactant intactId="EBI-11525448">
        <id>O43281-2</id>
    </interactant>
    <interactant intactId="EBI-16432934">
        <id>A0A0S2Z4E4</id>
        <label>NCK1</label>
    </interactant>
    <organismsDiffer>false</organismsDiffer>
    <experiments>3</experiments>
</comment>
<comment type="interaction">
    <interactant intactId="EBI-11525448">
        <id>O43281-2</id>
    </interactant>
    <interactant intactId="EBI-16429362">
        <id>E7ERP6</id>
        <label>NCK2</label>
    </interactant>
    <organismsDiffer>false</organismsDiffer>
    <experiments>3</experiments>
</comment>
<comment type="interaction">
    <interactant intactId="EBI-11525448">
        <id>O43281-2</id>
    </interactant>
    <interactant intactId="EBI-714158">
        <id>Q13526</id>
        <label>PIN1</label>
    </interactant>
    <organismsDiffer>false</organismsDiffer>
    <experiments>3</experiments>
</comment>
<comment type="interaction">
    <interactant intactId="EBI-11525448">
        <id>O43281-2</id>
    </interactant>
    <interactant intactId="EBI-2130111">
        <id>Q8TEC5</id>
        <label>SH3RF2</label>
    </interactant>
    <organismsDiffer>false</organismsDiffer>
    <experiments>3</experiments>
</comment>
<comment type="interaction">
    <interactant intactId="EBI-11525448">
        <id>O43281-2</id>
    </interactant>
    <interactant intactId="EBI-12037893">
        <id>O94875-10</id>
        <label>SORBS2</label>
    </interactant>
    <organismsDiffer>false</organismsDiffer>
    <experiments>3</experiments>
</comment>
<comment type="interaction">
    <interactant intactId="EBI-11525448">
        <id>O43281-2</id>
    </interactant>
    <interactant intactId="EBI-8451480">
        <id>O75865-2</id>
        <label>TRAPPC6A</label>
    </interactant>
    <organismsDiffer>false</organismsDiffer>
    <experiments>3</experiments>
</comment>
<comment type="interaction">
    <interactant intactId="EBI-11525448">
        <id>O43281-2</id>
    </interactant>
    <interactant intactId="EBI-6423734">
        <id>Q9BXA7</id>
        <label>TSSK1B</label>
    </interactant>
    <organismsDiffer>false</organismsDiffer>
    <experiments>3</experiments>
</comment>
<comment type="interaction">
    <interactant intactId="EBI-11525448">
        <id>O43281-2</id>
    </interactant>
    <interactant intactId="EBI-1380492">
        <id>Q8TF42</id>
        <label>UBASH3B</label>
    </interactant>
    <organismsDiffer>false</organismsDiffer>
    <experiments>3</experiments>
</comment>
<comment type="interaction">
    <interactant intactId="EBI-11525448">
        <id>O43281-2</id>
    </interactant>
    <interactant intactId="EBI-515331">
        <id>P07947</id>
        <label>YES1</label>
    </interactant>
    <organismsDiffer>false</organismsDiffer>
    <experiments>5</experiments>
</comment>
<comment type="alternative products">
    <event type="alternative splicing"/>
    <isoform>
        <id>O43281-1</id>
        <name>Efs1</name>
        <sequence type="displayed"/>
    </isoform>
    <isoform>
        <id>O43281-2</id>
        <name>Efs2</name>
        <sequence type="described" ref="VSP_004232"/>
    </isoform>
    <isoform>
        <id>O43281-3</id>
        <name>3</name>
        <sequence type="described" ref="VSP_004232 VSP_054584"/>
    </isoform>
</comment>
<comment type="tissue specificity">
    <text>The protein has been detected in lung and placenta.</text>
</comment>
<comment type="domain">
    <text>Contains a central domain (substrate domain) containing multiple potential SH2-binding sites and a C-terminal domain containing a divergent helix-loop-helix (HLH) motif. The SH2-binding sites putatively bind CRK, NCK and ABL SH2 domains.</text>
</comment>
<comment type="domain">
    <text>The SH3-binding sites that bind to the SRC SH3 domain are required for interaction with CRK and are implicated in promotion of serum response element (SRE) activation. The SH3 domain interacts with PTK2/FAK1.</text>
</comment>
<comment type="PTM">
    <text evidence="1">Phosphorylated on multiple tyrosine residues. Phosphorylated on tyrosines by FYN and SRC (By similarity).</text>
</comment>
<comment type="similarity">
    <text evidence="10">Belongs to the CAS family.</text>
</comment>
<reference key="1">
    <citation type="journal article" date="1997" name="Oncogene">
        <title>Identification of an Efs isoform that lacks the SH3 domain and chromosomal mapping of human Efs.</title>
        <authorList>
            <person name="Ishino M."/>
            <person name="Ohba T."/>
            <person name="Inazawa J."/>
            <person name="Sasaki H."/>
            <person name="Ariyama Y."/>
            <person name="Sasaki T."/>
        </authorList>
    </citation>
    <scope>NUCLEOTIDE SEQUENCE [MRNA] (ISOFORMS EFS1 AND EFS2)</scope>
    <source>
        <tissue>Hippocampus</tissue>
    </source>
</reference>
<reference key="2">
    <citation type="journal article" date="2004" name="Nat. Genet.">
        <title>Complete sequencing and characterization of 21,243 full-length human cDNAs.</title>
        <authorList>
            <person name="Ota T."/>
            <person name="Suzuki Y."/>
            <person name="Nishikawa T."/>
            <person name="Otsuki T."/>
            <person name="Sugiyama T."/>
            <person name="Irie R."/>
            <person name="Wakamatsu A."/>
            <person name="Hayashi K."/>
            <person name="Sato H."/>
            <person name="Nagai K."/>
            <person name="Kimura K."/>
            <person name="Makita H."/>
            <person name="Sekine M."/>
            <person name="Obayashi M."/>
            <person name="Nishi T."/>
            <person name="Shibahara T."/>
            <person name="Tanaka T."/>
            <person name="Ishii S."/>
            <person name="Yamamoto J."/>
            <person name="Saito K."/>
            <person name="Kawai Y."/>
            <person name="Isono Y."/>
            <person name="Nakamura Y."/>
            <person name="Nagahari K."/>
            <person name="Murakami K."/>
            <person name="Yasuda T."/>
            <person name="Iwayanagi T."/>
            <person name="Wagatsuma M."/>
            <person name="Shiratori A."/>
            <person name="Sudo H."/>
            <person name="Hosoiri T."/>
            <person name="Kaku Y."/>
            <person name="Kodaira H."/>
            <person name="Kondo H."/>
            <person name="Sugawara M."/>
            <person name="Takahashi M."/>
            <person name="Kanda K."/>
            <person name="Yokoi T."/>
            <person name="Furuya T."/>
            <person name="Kikkawa E."/>
            <person name="Omura Y."/>
            <person name="Abe K."/>
            <person name="Kamihara K."/>
            <person name="Katsuta N."/>
            <person name="Sato K."/>
            <person name="Tanikawa M."/>
            <person name="Yamazaki M."/>
            <person name="Ninomiya K."/>
            <person name="Ishibashi T."/>
            <person name="Yamashita H."/>
            <person name="Murakawa K."/>
            <person name="Fujimori K."/>
            <person name="Tanai H."/>
            <person name="Kimata M."/>
            <person name="Watanabe M."/>
            <person name="Hiraoka S."/>
            <person name="Chiba Y."/>
            <person name="Ishida S."/>
            <person name="Ono Y."/>
            <person name="Takiguchi S."/>
            <person name="Watanabe S."/>
            <person name="Yosida M."/>
            <person name="Hotuta T."/>
            <person name="Kusano J."/>
            <person name="Kanehori K."/>
            <person name="Takahashi-Fujii A."/>
            <person name="Hara H."/>
            <person name="Tanase T.-O."/>
            <person name="Nomura Y."/>
            <person name="Togiya S."/>
            <person name="Komai F."/>
            <person name="Hara R."/>
            <person name="Takeuchi K."/>
            <person name="Arita M."/>
            <person name="Imose N."/>
            <person name="Musashino K."/>
            <person name="Yuuki H."/>
            <person name="Oshima A."/>
            <person name="Sasaki N."/>
            <person name="Aotsuka S."/>
            <person name="Yoshikawa Y."/>
            <person name="Matsunawa H."/>
            <person name="Ichihara T."/>
            <person name="Shiohata N."/>
            <person name="Sano S."/>
            <person name="Moriya S."/>
            <person name="Momiyama H."/>
            <person name="Satoh N."/>
            <person name="Takami S."/>
            <person name="Terashima Y."/>
            <person name="Suzuki O."/>
            <person name="Nakagawa S."/>
            <person name="Senoh A."/>
            <person name="Mizoguchi H."/>
            <person name="Goto Y."/>
            <person name="Shimizu F."/>
            <person name="Wakebe H."/>
            <person name="Hishigaki H."/>
            <person name="Watanabe T."/>
            <person name="Sugiyama A."/>
            <person name="Takemoto M."/>
            <person name="Kawakami B."/>
            <person name="Yamazaki M."/>
            <person name="Watanabe K."/>
            <person name="Kumagai A."/>
            <person name="Itakura S."/>
            <person name="Fukuzumi Y."/>
            <person name="Fujimori Y."/>
            <person name="Komiyama M."/>
            <person name="Tashiro H."/>
            <person name="Tanigami A."/>
            <person name="Fujiwara T."/>
            <person name="Ono T."/>
            <person name="Yamada K."/>
            <person name="Fujii Y."/>
            <person name="Ozaki K."/>
            <person name="Hirao M."/>
            <person name="Ohmori Y."/>
            <person name="Kawabata A."/>
            <person name="Hikiji T."/>
            <person name="Kobatake N."/>
            <person name="Inagaki H."/>
            <person name="Ikema Y."/>
            <person name="Okamoto S."/>
            <person name="Okitani R."/>
            <person name="Kawakami T."/>
            <person name="Noguchi S."/>
            <person name="Itoh T."/>
            <person name="Shigeta K."/>
            <person name="Senba T."/>
            <person name="Matsumura K."/>
            <person name="Nakajima Y."/>
            <person name="Mizuno T."/>
            <person name="Morinaga M."/>
            <person name="Sasaki M."/>
            <person name="Togashi T."/>
            <person name="Oyama M."/>
            <person name="Hata H."/>
            <person name="Watanabe M."/>
            <person name="Komatsu T."/>
            <person name="Mizushima-Sugano J."/>
            <person name="Satoh T."/>
            <person name="Shirai Y."/>
            <person name="Takahashi Y."/>
            <person name="Nakagawa K."/>
            <person name="Okumura K."/>
            <person name="Nagase T."/>
            <person name="Nomura N."/>
            <person name="Kikuchi H."/>
            <person name="Masuho Y."/>
            <person name="Yamashita R."/>
            <person name="Nakai K."/>
            <person name="Yada T."/>
            <person name="Nakamura Y."/>
            <person name="Ohara O."/>
            <person name="Isogai T."/>
            <person name="Sugano S."/>
        </authorList>
    </citation>
    <scope>NUCLEOTIDE SEQUENCE [LARGE SCALE MRNA] (ISOFORMS EFS1 AND 3)</scope>
    <source>
        <tissue>Amygdala</tissue>
        <tissue>Substantia nigra</tissue>
    </source>
</reference>
<reference key="3">
    <citation type="journal article" date="2003" name="Nature">
        <title>The DNA sequence and analysis of human chromosome 14.</title>
        <authorList>
            <person name="Heilig R."/>
            <person name="Eckenberg R."/>
            <person name="Petit J.-L."/>
            <person name="Fonknechten N."/>
            <person name="Da Silva C."/>
            <person name="Cattolico L."/>
            <person name="Levy M."/>
            <person name="Barbe V."/>
            <person name="De Berardinis V."/>
            <person name="Ureta-Vidal A."/>
            <person name="Pelletier E."/>
            <person name="Vico V."/>
            <person name="Anthouard V."/>
            <person name="Rowen L."/>
            <person name="Madan A."/>
            <person name="Qin S."/>
            <person name="Sun H."/>
            <person name="Du H."/>
            <person name="Pepin K."/>
            <person name="Artiguenave F."/>
            <person name="Robert C."/>
            <person name="Cruaud C."/>
            <person name="Bruels T."/>
            <person name="Jaillon O."/>
            <person name="Friedlander L."/>
            <person name="Samson G."/>
            <person name="Brottier P."/>
            <person name="Cure S."/>
            <person name="Segurens B."/>
            <person name="Aniere F."/>
            <person name="Samain S."/>
            <person name="Crespeau H."/>
            <person name="Abbasi N."/>
            <person name="Aiach N."/>
            <person name="Boscus D."/>
            <person name="Dickhoff R."/>
            <person name="Dors M."/>
            <person name="Dubois I."/>
            <person name="Friedman C."/>
            <person name="Gouyvenoux M."/>
            <person name="James R."/>
            <person name="Madan A."/>
            <person name="Mairey-Estrada B."/>
            <person name="Mangenot S."/>
            <person name="Martins N."/>
            <person name="Menard M."/>
            <person name="Oztas S."/>
            <person name="Ratcliffe A."/>
            <person name="Shaffer T."/>
            <person name="Trask B."/>
            <person name="Vacherie B."/>
            <person name="Bellemere C."/>
            <person name="Belser C."/>
            <person name="Besnard-Gonnet M."/>
            <person name="Bartol-Mavel D."/>
            <person name="Boutard M."/>
            <person name="Briez-Silla S."/>
            <person name="Combette S."/>
            <person name="Dufosse-Laurent V."/>
            <person name="Ferron C."/>
            <person name="Lechaplais C."/>
            <person name="Louesse C."/>
            <person name="Muselet D."/>
            <person name="Magdelenat G."/>
            <person name="Pateau E."/>
            <person name="Petit E."/>
            <person name="Sirvain-Trukniewicz P."/>
            <person name="Trybou A."/>
            <person name="Vega-Czarny N."/>
            <person name="Bataille E."/>
            <person name="Bluet E."/>
            <person name="Bordelais I."/>
            <person name="Dubois M."/>
            <person name="Dumont C."/>
            <person name="Guerin T."/>
            <person name="Haffray S."/>
            <person name="Hammadi R."/>
            <person name="Muanga J."/>
            <person name="Pellouin V."/>
            <person name="Robert D."/>
            <person name="Wunderle E."/>
            <person name="Gauguet G."/>
            <person name="Roy A."/>
            <person name="Sainte-Marthe L."/>
            <person name="Verdier J."/>
            <person name="Verdier-Discala C."/>
            <person name="Hillier L.W."/>
            <person name="Fulton L."/>
            <person name="McPherson J."/>
            <person name="Matsuda F."/>
            <person name="Wilson R."/>
            <person name="Scarpelli C."/>
            <person name="Gyapay G."/>
            <person name="Wincker P."/>
            <person name="Saurin W."/>
            <person name="Quetier F."/>
            <person name="Waterston R."/>
            <person name="Hood L."/>
            <person name="Weissenbach J."/>
        </authorList>
    </citation>
    <scope>NUCLEOTIDE SEQUENCE [LARGE SCALE GENOMIC DNA]</scope>
</reference>
<reference key="4">
    <citation type="submission" date="2005-09" db="EMBL/GenBank/DDBJ databases">
        <authorList>
            <person name="Mural R.J."/>
            <person name="Istrail S."/>
            <person name="Sutton G.G."/>
            <person name="Florea L."/>
            <person name="Halpern A.L."/>
            <person name="Mobarry C.M."/>
            <person name="Lippert R."/>
            <person name="Walenz B."/>
            <person name="Shatkay H."/>
            <person name="Dew I."/>
            <person name="Miller J.R."/>
            <person name="Flanigan M.J."/>
            <person name="Edwards N.J."/>
            <person name="Bolanos R."/>
            <person name="Fasulo D."/>
            <person name="Halldorsson B.V."/>
            <person name="Hannenhalli S."/>
            <person name="Turner R."/>
            <person name="Yooseph S."/>
            <person name="Lu F."/>
            <person name="Nusskern D.R."/>
            <person name="Shue B.C."/>
            <person name="Zheng X.H."/>
            <person name="Zhong F."/>
            <person name="Delcher A.L."/>
            <person name="Huson D.H."/>
            <person name="Kravitz S.A."/>
            <person name="Mouchard L."/>
            <person name="Reinert K."/>
            <person name="Remington K.A."/>
            <person name="Clark A.G."/>
            <person name="Waterman M.S."/>
            <person name="Eichler E.E."/>
            <person name="Adams M.D."/>
            <person name="Hunkapiller M.W."/>
            <person name="Myers E.W."/>
            <person name="Venter J.C."/>
        </authorList>
    </citation>
    <scope>NUCLEOTIDE SEQUENCE [LARGE SCALE GENOMIC DNA]</scope>
</reference>
<reference key="5">
    <citation type="journal article" date="2004" name="Genome Res.">
        <title>The status, quality, and expansion of the NIH full-length cDNA project: the Mammalian Gene Collection (MGC).</title>
        <authorList>
            <consortium name="The MGC Project Team"/>
        </authorList>
    </citation>
    <scope>NUCLEOTIDE SEQUENCE [LARGE SCALE MRNA] (ISOFORM EFS2)</scope>
    <source>
        <tissue>Brain</tissue>
    </source>
</reference>
<reference key="6">
    <citation type="journal article" date="2006" name="Science">
        <title>The consensus coding sequences of human breast and colorectal cancers.</title>
        <authorList>
            <person name="Sjoeblom T."/>
            <person name="Jones S."/>
            <person name="Wood L.D."/>
            <person name="Parsons D.W."/>
            <person name="Lin J."/>
            <person name="Barber T.D."/>
            <person name="Mandelker D."/>
            <person name="Leary R.J."/>
            <person name="Ptak J."/>
            <person name="Silliman N."/>
            <person name="Szabo S."/>
            <person name="Buckhaults P."/>
            <person name="Farrell C."/>
            <person name="Meeh P."/>
            <person name="Markowitz S.D."/>
            <person name="Willis J."/>
            <person name="Dawson D."/>
            <person name="Willson J.K.V."/>
            <person name="Gazdar A.F."/>
            <person name="Hartigan J."/>
            <person name="Wu L."/>
            <person name="Liu C."/>
            <person name="Parmigiani G."/>
            <person name="Park B.H."/>
            <person name="Bachman K.E."/>
            <person name="Papadopoulos N."/>
            <person name="Vogelstein B."/>
            <person name="Kinzler K.W."/>
            <person name="Velculescu V.E."/>
        </authorList>
    </citation>
    <scope>VARIANT [LARGE SCALE ANALYSIS] ILE-361</scope>
</reference>
<gene>
    <name type="primary">EFS</name>
    <name type="synonym">CASS3</name>
</gene>
<sequence length="561" mass="58815">MAIATSTQLARALYDNTAESPQELSFRRGDVLRVLQREGAGGLDGWCLCSLHGQQGIVPANRVKLLPAGPAPKPSLSPASPAQPGSPYPAPDHSNEDQEVYVVPPPARPCPTSGPPAGPCPPSPDLIYKIPRASGTQLAAPRDALEVYDVPPTALRVPSSGPYDCPASFSHPLTRVAPQPPGEDDAPYDVPLTPKPPAELEPDLEWEGGREPGPPIYAAPSNLKRASALLNLYEAPEELLADGEGGGTDEGIYDVPLLGPEAPPSPEPPGALASHDQDTLAQLLARSPPPPHRPRLPSAESLSRRPLPALPVPEAPSPSPVPSPAPGRKGSIQDRPLPPPPPRLPGYGGPKVEGDPEGREMEDDPAGHHNEYEGIPMAEEYDYVHLKGMDKAQGSRPPDQACTGDPELPERGMPAPQEALSPGEPLVVSTGDLQLLYFYAGQCQSHYSALQAAVAALMSSTQANQPPRLFVPHSKRVVVAAHRLVFVGDTLGRLAASAPLRAQVRAAGTALGQALRATVLAVKGAALGYPSSPAIQEMVQCVTELAGQALQFTTLLTSLAP</sequence>
<organism>
    <name type="scientific">Homo sapiens</name>
    <name type="common">Human</name>
    <dbReference type="NCBI Taxonomy" id="9606"/>
    <lineage>
        <taxon>Eukaryota</taxon>
        <taxon>Metazoa</taxon>
        <taxon>Chordata</taxon>
        <taxon>Craniata</taxon>
        <taxon>Vertebrata</taxon>
        <taxon>Euteleostomi</taxon>
        <taxon>Mammalia</taxon>
        <taxon>Eutheria</taxon>
        <taxon>Euarchontoglires</taxon>
        <taxon>Primates</taxon>
        <taxon>Haplorrhini</taxon>
        <taxon>Catarrhini</taxon>
        <taxon>Hominidae</taxon>
        <taxon>Homo</taxon>
    </lineage>
</organism>
<protein>
    <recommendedName>
        <fullName>Embryonal Fyn-associated substrate</fullName>
        <shortName>hEFS</shortName>
    </recommendedName>
    <alternativeName>
        <fullName>Cas scaffolding protein family member 3</fullName>
    </alternativeName>
</protein>
<dbReference type="EMBL" id="AB001466">
    <property type="protein sequence ID" value="BAA24588.1"/>
    <property type="molecule type" value="mRNA"/>
</dbReference>
<dbReference type="EMBL" id="AB001467">
    <property type="protein sequence ID" value="BAA24589.1"/>
    <property type="molecule type" value="mRNA"/>
</dbReference>
<dbReference type="EMBL" id="AK295933">
    <property type="protein sequence ID" value="BAG58718.1"/>
    <property type="molecule type" value="mRNA"/>
</dbReference>
<dbReference type="EMBL" id="AK314221">
    <property type="protein sequence ID" value="BAG36894.1"/>
    <property type="molecule type" value="mRNA"/>
</dbReference>
<dbReference type="EMBL" id="AL049829">
    <property type="status" value="NOT_ANNOTATED_CDS"/>
    <property type="molecule type" value="Genomic_DNA"/>
</dbReference>
<dbReference type="EMBL" id="CH471078">
    <property type="protein sequence ID" value="EAW66164.1"/>
    <property type="molecule type" value="Genomic_DNA"/>
</dbReference>
<dbReference type="EMBL" id="BC034246">
    <property type="protein sequence ID" value="AAH34246.1"/>
    <property type="molecule type" value="mRNA"/>
</dbReference>
<dbReference type="CCDS" id="CCDS61404.1">
    <molecule id="O43281-3"/>
</dbReference>
<dbReference type="CCDS" id="CCDS9595.1">
    <molecule id="O43281-1"/>
</dbReference>
<dbReference type="CCDS" id="CCDS9596.1">
    <molecule id="O43281-2"/>
</dbReference>
<dbReference type="RefSeq" id="NP_001264103.1">
    <molecule id="O43281-3"/>
    <property type="nucleotide sequence ID" value="NM_001277174.2"/>
</dbReference>
<dbReference type="RefSeq" id="NP_005855.1">
    <molecule id="O43281-1"/>
    <property type="nucleotide sequence ID" value="NM_005864.4"/>
</dbReference>
<dbReference type="RefSeq" id="NP_115835.1">
    <molecule id="O43281-2"/>
    <property type="nucleotide sequence ID" value="NM_032459.3"/>
</dbReference>
<dbReference type="SMR" id="O43281"/>
<dbReference type="BioGRID" id="115567">
    <property type="interactions" value="38"/>
</dbReference>
<dbReference type="FunCoup" id="O43281">
    <property type="interactions" value="43"/>
</dbReference>
<dbReference type="IntAct" id="O43281">
    <property type="interactions" value="37"/>
</dbReference>
<dbReference type="MINT" id="O43281"/>
<dbReference type="STRING" id="9606.ENSP00000216733"/>
<dbReference type="GlyGen" id="O43281">
    <property type="glycosylation" value="2 sites"/>
</dbReference>
<dbReference type="iPTMnet" id="O43281"/>
<dbReference type="PhosphoSitePlus" id="O43281"/>
<dbReference type="BioMuta" id="EFS"/>
<dbReference type="jPOST" id="O43281"/>
<dbReference type="MassIVE" id="O43281"/>
<dbReference type="PaxDb" id="9606-ENSP00000216733"/>
<dbReference type="PeptideAtlas" id="O43281"/>
<dbReference type="ProteomicsDB" id="4348"/>
<dbReference type="ProteomicsDB" id="48850">
    <molecule id="O43281-1"/>
</dbReference>
<dbReference type="ProteomicsDB" id="48851">
    <molecule id="O43281-2"/>
</dbReference>
<dbReference type="Antibodypedia" id="22453">
    <property type="antibodies" value="74 antibodies from 22 providers"/>
</dbReference>
<dbReference type="DNASU" id="10278"/>
<dbReference type="Ensembl" id="ENST00000216733.8">
    <molecule id="O43281-1"/>
    <property type="protein sequence ID" value="ENSP00000216733.3"/>
    <property type="gene ID" value="ENSG00000100842.13"/>
</dbReference>
<dbReference type="Ensembl" id="ENST00000351354.3">
    <molecule id="O43281-2"/>
    <property type="protein sequence ID" value="ENSP00000340607.3"/>
    <property type="gene ID" value="ENSG00000100842.13"/>
</dbReference>
<dbReference type="Ensembl" id="ENST00000429593.6">
    <molecule id="O43281-3"/>
    <property type="protein sequence ID" value="ENSP00000416684.2"/>
    <property type="gene ID" value="ENSG00000100842.13"/>
</dbReference>
<dbReference type="GeneID" id="10278"/>
<dbReference type="KEGG" id="hsa:10278"/>
<dbReference type="MANE-Select" id="ENST00000216733.8">
    <property type="protein sequence ID" value="ENSP00000216733.3"/>
    <property type="RefSeq nucleotide sequence ID" value="NM_005864.4"/>
    <property type="RefSeq protein sequence ID" value="NP_005855.1"/>
</dbReference>
<dbReference type="UCSC" id="uc001wjo.5">
    <molecule id="O43281-1"/>
    <property type="organism name" value="human"/>
</dbReference>
<dbReference type="AGR" id="HGNC:16898"/>
<dbReference type="CTD" id="10278"/>
<dbReference type="DisGeNET" id="10278"/>
<dbReference type="GeneCards" id="EFS"/>
<dbReference type="HGNC" id="HGNC:16898">
    <property type="gene designation" value="EFS"/>
</dbReference>
<dbReference type="HPA" id="ENSG00000100842">
    <property type="expression patterns" value="Low tissue specificity"/>
</dbReference>
<dbReference type="MIM" id="609906">
    <property type="type" value="gene"/>
</dbReference>
<dbReference type="neXtProt" id="NX_O43281"/>
<dbReference type="OpenTargets" id="ENSG00000100842"/>
<dbReference type="PharmGKB" id="PA134887136"/>
<dbReference type="VEuPathDB" id="HostDB:ENSG00000100842"/>
<dbReference type="eggNOG" id="ENOG502QUFB">
    <property type="taxonomic scope" value="Eukaryota"/>
</dbReference>
<dbReference type="GeneTree" id="ENSGT00950000183008"/>
<dbReference type="HOGENOM" id="CLU_012582_1_0_1"/>
<dbReference type="InParanoid" id="O43281"/>
<dbReference type="OMA" id="HRNEYEG"/>
<dbReference type="OrthoDB" id="5983572at2759"/>
<dbReference type="PAN-GO" id="O43281">
    <property type="GO annotations" value="6 GO annotations based on evolutionary models"/>
</dbReference>
<dbReference type="PhylomeDB" id="O43281"/>
<dbReference type="TreeFam" id="TF328782"/>
<dbReference type="PathwayCommons" id="O43281"/>
<dbReference type="SignaLink" id="O43281"/>
<dbReference type="BioGRID-ORCS" id="10278">
    <property type="hits" value="18 hits in 1144 CRISPR screens"/>
</dbReference>
<dbReference type="ChiTaRS" id="EFS">
    <property type="organism name" value="human"/>
</dbReference>
<dbReference type="GenomeRNAi" id="10278"/>
<dbReference type="Pharos" id="O43281">
    <property type="development level" value="Tbio"/>
</dbReference>
<dbReference type="PRO" id="PR:O43281"/>
<dbReference type="Proteomes" id="UP000005640">
    <property type="component" value="Chromosome 14"/>
</dbReference>
<dbReference type="RNAct" id="O43281">
    <property type="molecule type" value="protein"/>
</dbReference>
<dbReference type="Bgee" id="ENSG00000100842">
    <property type="expression patterns" value="Expressed in ganglionic eminence and 189 other cell types or tissues"/>
</dbReference>
<dbReference type="GO" id="GO:0005737">
    <property type="term" value="C:cytoplasm"/>
    <property type="evidence" value="ECO:0000318"/>
    <property type="project" value="GO_Central"/>
</dbReference>
<dbReference type="GO" id="GO:0005925">
    <property type="term" value="C:focal adhesion"/>
    <property type="evidence" value="ECO:0000318"/>
    <property type="project" value="GO_Central"/>
</dbReference>
<dbReference type="GO" id="GO:0019904">
    <property type="term" value="F:protein domain specific binding"/>
    <property type="evidence" value="ECO:0000353"/>
    <property type="project" value="UniProtKB"/>
</dbReference>
<dbReference type="GO" id="GO:0017124">
    <property type="term" value="F:SH3 domain binding"/>
    <property type="evidence" value="ECO:0007669"/>
    <property type="project" value="UniProtKB-KW"/>
</dbReference>
<dbReference type="GO" id="GO:0007155">
    <property type="term" value="P:cell adhesion"/>
    <property type="evidence" value="ECO:0007669"/>
    <property type="project" value="UniProtKB-KW"/>
</dbReference>
<dbReference type="GO" id="GO:0016477">
    <property type="term" value="P:cell migration"/>
    <property type="evidence" value="ECO:0000318"/>
    <property type="project" value="GO_Central"/>
</dbReference>
<dbReference type="GO" id="GO:0007169">
    <property type="term" value="P:cell surface receptor protein tyrosine kinase signaling pathway"/>
    <property type="evidence" value="ECO:0000318"/>
    <property type="project" value="GO_Central"/>
</dbReference>
<dbReference type="GO" id="GO:0035556">
    <property type="term" value="P:intracellular signal transduction"/>
    <property type="evidence" value="ECO:0000304"/>
    <property type="project" value="ProtInc"/>
</dbReference>
<dbReference type="CDD" id="cd11571">
    <property type="entry name" value="FAT-like_EFS_C"/>
    <property type="match status" value="1"/>
</dbReference>
<dbReference type="CDD" id="cd12003">
    <property type="entry name" value="SH3_EFS"/>
    <property type="match status" value="1"/>
</dbReference>
<dbReference type="FunFam" id="1.20.120.230:FF:000001">
    <property type="entry name" value="Breast cancer anti-estrogen resistance 1"/>
    <property type="match status" value="1"/>
</dbReference>
<dbReference type="FunFam" id="2.30.30.40:FF:000009">
    <property type="entry name" value="Breast cancer anti-estrogen resistance 1"/>
    <property type="match status" value="1"/>
</dbReference>
<dbReference type="Gene3D" id="1.20.120.230">
    <property type="entry name" value="Alpha-catenin/vinculin-like"/>
    <property type="match status" value="1"/>
</dbReference>
<dbReference type="Gene3D" id="2.30.30.40">
    <property type="entry name" value="SH3 Domains"/>
    <property type="match status" value="1"/>
</dbReference>
<dbReference type="InterPro" id="IPR021901">
    <property type="entry name" value="CAS_C"/>
</dbReference>
<dbReference type="InterPro" id="IPR037362">
    <property type="entry name" value="CAS_fam"/>
</dbReference>
<dbReference type="InterPro" id="IPR035747">
    <property type="entry name" value="EFS_SH3"/>
</dbReference>
<dbReference type="InterPro" id="IPR036028">
    <property type="entry name" value="SH3-like_dom_sf"/>
</dbReference>
<dbReference type="InterPro" id="IPR001452">
    <property type="entry name" value="SH3_domain"/>
</dbReference>
<dbReference type="PANTHER" id="PTHR10654">
    <property type="entry name" value="CAS SCAFFOLDING PROTEIN"/>
    <property type="match status" value="1"/>
</dbReference>
<dbReference type="PANTHER" id="PTHR10654:SF14">
    <property type="entry name" value="EMBRYONAL FYN-ASSOCIATED SUBSTRATE"/>
    <property type="match status" value="1"/>
</dbReference>
<dbReference type="Pfam" id="PF12026">
    <property type="entry name" value="CAS_C"/>
    <property type="match status" value="1"/>
</dbReference>
<dbReference type="Pfam" id="PF14604">
    <property type="entry name" value="SH3_9"/>
    <property type="match status" value="1"/>
</dbReference>
<dbReference type="PRINTS" id="PR00452">
    <property type="entry name" value="SH3DOMAIN"/>
</dbReference>
<dbReference type="SMART" id="SM00326">
    <property type="entry name" value="SH3"/>
    <property type="match status" value="1"/>
</dbReference>
<dbReference type="SUPFAM" id="SSF50044">
    <property type="entry name" value="SH3-domain"/>
    <property type="match status" value="1"/>
</dbReference>
<dbReference type="PROSITE" id="PS50002">
    <property type="entry name" value="SH3"/>
    <property type="match status" value="1"/>
</dbReference>
<proteinExistence type="evidence at protein level"/>
<name>EFS_HUMAN</name>
<keyword id="KW-0025">Alternative splicing</keyword>
<keyword id="KW-0130">Cell adhesion</keyword>
<keyword id="KW-0597">Phosphoprotein</keyword>
<keyword id="KW-1267">Proteomics identification</keyword>
<keyword id="KW-1185">Reference proteome</keyword>
<keyword id="KW-0728">SH3 domain</keyword>
<keyword id="KW-0729">SH3-binding</keyword>